<dbReference type="EMBL" id="BX284603">
    <property type="protein sequence ID" value="CAA83463.1"/>
    <property type="molecule type" value="Genomic_DNA"/>
</dbReference>
<dbReference type="PIR" id="E88577">
    <property type="entry name" value="E88577"/>
</dbReference>
<dbReference type="PIR" id="S43569">
    <property type="entry name" value="S43569"/>
</dbReference>
<dbReference type="RefSeq" id="NP_499272.1">
    <property type="nucleotide sequence ID" value="NM_066871.2"/>
</dbReference>
<dbReference type="SMR" id="Q21626"/>
<dbReference type="ComplexPortal" id="CPX-428">
    <property type="entry name" value="BBSome complex"/>
</dbReference>
<dbReference type="DIP" id="DIP-25246N"/>
<dbReference type="FunCoup" id="Q21626">
    <property type="interactions" value="433"/>
</dbReference>
<dbReference type="IntAct" id="Q21626">
    <property type="interactions" value="3"/>
</dbReference>
<dbReference type="STRING" id="6239.R01H10.6.1"/>
<dbReference type="TCDB" id="3.A.33.1.2">
    <property type="family name" value="the bbsome complex (bbsome) family"/>
</dbReference>
<dbReference type="PaxDb" id="6239-R01H10.6"/>
<dbReference type="EnsemblMetazoa" id="R01H10.6.1">
    <property type="protein sequence ID" value="R01H10.6.1"/>
    <property type="gene ID" value="WBGene00010974"/>
</dbReference>
<dbReference type="GeneID" id="187516"/>
<dbReference type="KEGG" id="cel:CELE_R01H10.6"/>
<dbReference type="UCSC" id="R01H10.6">
    <property type="organism name" value="c. elegans"/>
</dbReference>
<dbReference type="AGR" id="WB:WBGene00010974"/>
<dbReference type="CTD" id="187516"/>
<dbReference type="WormBase" id="R01H10.6">
    <property type="protein sequence ID" value="CE01042"/>
    <property type="gene ID" value="WBGene00010974"/>
    <property type="gene designation" value="bbs-5"/>
</dbReference>
<dbReference type="eggNOG" id="ENOG502QR2Z">
    <property type="taxonomic scope" value="Eukaryota"/>
</dbReference>
<dbReference type="GeneTree" id="ENSGT00390000002753"/>
<dbReference type="HOGENOM" id="CLU_052113_0_0_1"/>
<dbReference type="InParanoid" id="Q21626"/>
<dbReference type="OMA" id="PNFGIQY"/>
<dbReference type="OrthoDB" id="10261999at2759"/>
<dbReference type="PhylomeDB" id="Q21626"/>
<dbReference type="Reactome" id="R-CEL-5620922">
    <property type="pathway name" value="BBSome-mediated cargo-targeting to cilium"/>
</dbReference>
<dbReference type="PRO" id="PR:Q21626"/>
<dbReference type="Proteomes" id="UP000001940">
    <property type="component" value="Chromosome III"/>
</dbReference>
<dbReference type="Bgee" id="WBGene00010974">
    <property type="expression patterns" value="Expressed in pharyngeal muscle cell (C elegans) and 3 other cell types or tissues"/>
</dbReference>
<dbReference type="GO" id="GO:0005930">
    <property type="term" value="C:axoneme"/>
    <property type="evidence" value="ECO:0000314"/>
    <property type="project" value="UniProtKB"/>
</dbReference>
<dbReference type="GO" id="GO:0034464">
    <property type="term" value="C:BBSome"/>
    <property type="evidence" value="ECO:0000318"/>
    <property type="project" value="GO_Central"/>
</dbReference>
<dbReference type="GO" id="GO:0034451">
    <property type="term" value="C:centriolar satellite"/>
    <property type="evidence" value="ECO:0007669"/>
    <property type="project" value="UniProtKB-SubCell"/>
</dbReference>
<dbReference type="GO" id="GO:0036064">
    <property type="term" value="C:ciliary basal body"/>
    <property type="evidence" value="ECO:0000314"/>
    <property type="project" value="BHF-UCL"/>
</dbReference>
<dbReference type="GO" id="GO:0097546">
    <property type="term" value="C:ciliary base"/>
    <property type="evidence" value="ECO:0000314"/>
    <property type="project" value="UniProtKB"/>
</dbReference>
<dbReference type="GO" id="GO:0060170">
    <property type="term" value="C:ciliary membrane"/>
    <property type="evidence" value="ECO:0007669"/>
    <property type="project" value="UniProtKB-SubCell"/>
</dbReference>
<dbReference type="GO" id="GO:0005929">
    <property type="term" value="C:cilium"/>
    <property type="evidence" value="ECO:0000303"/>
    <property type="project" value="ComplexPortal"/>
</dbReference>
<dbReference type="GO" id="GO:0097730">
    <property type="term" value="C:non-motile cilium"/>
    <property type="evidence" value="ECO:0000314"/>
    <property type="project" value="WormBase"/>
</dbReference>
<dbReference type="GO" id="GO:0032266">
    <property type="term" value="F:phosphatidylinositol-3-phosphate binding"/>
    <property type="evidence" value="ECO:0000318"/>
    <property type="project" value="GO_Central"/>
</dbReference>
<dbReference type="GO" id="GO:0060271">
    <property type="term" value="P:cilium assembly"/>
    <property type="evidence" value="ECO:0000318"/>
    <property type="project" value="GO_Central"/>
</dbReference>
<dbReference type="GO" id="GO:0046907">
    <property type="term" value="P:intracellular transport"/>
    <property type="evidence" value="ECO:0000318"/>
    <property type="project" value="GO_Central"/>
</dbReference>
<dbReference type="GO" id="GO:0015031">
    <property type="term" value="P:protein transport"/>
    <property type="evidence" value="ECO:0007669"/>
    <property type="project" value="UniProtKB-KW"/>
</dbReference>
<dbReference type="InterPro" id="IPR006606">
    <property type="entry name" value="BBL5"/>
</dbReference>
<dbReference type="InterPro" id="IPR030804">
    <property type="entry name" value="BBS5/fem-3"/>
</dbReference>
<dbReference type="InterPro" id="IPR014003">
    <property type="entry name" value="BBS5_PH"/>
</dbReference>
<dbReference type="PANTHER" id="PTHR21351:SF0">
    <property type="entry name" value="BARDET-BIEDL SYNDROME 5 PROTEIN"/>
    <property type="match status" value="1"/>
</dbReference>
<dbReference type="PANTHER" id="PTHR21351">
    <property type="entry name" value="BARDET-BIEDL SYNDROME PROTEIN 5"/>
    <property type="match status" value="1"/>
</dbReference>
<dbReference type="Pfam" id="PF07289">
    <property type="entry name" value="BBL5"/>
    <property type="match status" value="1"/>
</dbReference>
<dbReference type="PIRSF" id="PIRSF010072">
    <property type="entry name" value="DUF1448"/>
    <property type="match status" value="1"/>
</dbReference>
<dbReference type="SMART" id="SM00683">
    <property type="entry name" value="DM16"/>
    <property type="match status" value="2"/>
</dbReference>
<feature type="chain" id="PRO_0000435350" description="BBSome complex member bbs-5" evidence="5">
    <location>
        <begin position="1"/>
        <end position="361"/>
    </location>
</feature>
<accession>Q21626</accession>
<organism evidence="6">
    <name type="scientific">Caenorhabditis elegans</name>
    <dbReference type="NCBI Taxonomy" id="6239"/>
    <lineage>
        <taxon>Eukaryota</taxon>
        <taxon>Metazoa</taxon>
        <taxon>Ecdysozoa</taxon>
        <taxon>Nematoda</taxon>
        <taxon>Chromadorea</taxon>
        <taxon>Rhabditida</taxon>
        <taxon>Rhabditina</taxon>
        <taxon>Rhabditomorpha</taxon>
        <taxon>Rhabditoidea</taxon>
        <taxon>Rhabditidae</taxon>
        <taxon>Peloderinae</taxon>
        <taxon>Caenorhabditis</taxon>
    </lineage>
</organism>
<gene>
    <name evidence="7" type="primary">bbs-5</name>
    <name evidence="7" type="ORF">R01H10.6</name>
</gene>
<sequence length="361" mass="41054">MERVNGEDIWQDREIRFDVDHKLLRLINGEIQVAKIEHVEDTKGNNGDRGTMRVTNLRLIWHAASMPRINITIGWNAITGVQSKQTTSLVTRNRGISNEAIYVLAKVSATTTKFEFIFTTTNPASHSKLFNTISSISRAYETTKMYRELKMRGVFIREDGTLKILPQETIIEKVNGVWNLSTETGSLGVFVITNIRVVWYAEMNIGYNVSVPYITLYSVRVRESKFGMALVLETTTSSGEYVLGFRVDPAERLQNLLKTVQSLHKAHLLKPIFGVSYVKEIAEKVEPRKDDDEIDIIDNNEDDVEIDDKIRPDAFASYFDGEHTATDEKQLPVLNPELGLAIEPIRNGFTLHDLWNIHVDV</sequence>
<keyword id="KW-1003">Cell membrane</keyword>
<keyword id="KW-0966">Cell projection</keyword>
<keyword id="KW-0969">Cilium</keyword>
<keyword id="KW-0970">Cilium biogenesis/degradation</keyword>
<keyword id="KW-0963">Cytoplasm</keyword>
<keyword id="KW-0206">Cytoskeleton</keyword>
<keyword id="KW-0472">Membrane</keyword>
<keyword id="KW-0653">Protein transport</keyword>
<keyword id="KW-1185">Reference proteome</keyword>
<keyword id="KW-0813">Transport</keyword>
<name>BBS5_CAEEL</name>
<protein>
    <recommendedName>
        <fullName evidence="5">BBSome complex member bbs-5</fullName>
    </recommendedName>
    <alternativeName>
        <fullName evidence="7">Bardet-Biedl syndrome 5 protein homolog</fullName>
    </alternativeName>
</protein>
<comment type="function">
    <text evidence="1 3 4">Component of the BBSome complex (By similarity). The BBSome complex is thought to function as a coat complex required for sorting of specific membrane proteins to the primary cilia (By similarity). The BBSome complex is required for ciliogenesis but is dispensable for centriolar satellite function (By similarity). Required for BBSome complex ciliary localization but not for the proper complex assembly (By similarity). Required, redundantly with bbs-4, for cilia biogenesis and both the assembly and movement of intraflagellar transport proteins along the ciliary axoneme (PubMed:22922713, PubMed:26150102). Plays a role in the removal of degraded mechanosensory receptors within the cilia (PubMed:26150102).</text>
</comment>
<comment type="subunit">
    <text evidence="1 4">Part of BBSome complex, that contains at least bbs-1, bbs-2, bbs-4, bbs-5, osm-12, bbs-8/ttc-8 and bbs-9 (By similarity). Interacts with bbs-4 (via C-terminus); the interaction is direct (PubMed:26150102).</text>
</comment>
<comment type="subcellular location">
    <subcellularLocation>
        <location evidence="1">Cell projection</location>
        <location evidence="1">Cilium membrane</location>
    </subcellularLocation>
    <subcellularLocation>
        <location evidence="1">Cytoplasm</location>
    </subcellularLocation>
    <subcellularLocation>
        <location evidence="2">Cytoplasm</location>
        <location evidence="2">Cytoskeleton</location>
        <location evidence="2">Cilium basal body</location>
    </subcellularLocation>
    <subcellularLocation>
        <location evidence="1">Cytoplasm</location>
        <location evidence="1">Cytoskeleton</location>
        <location evidence="1">Microtubule organizing center</location>
        <location evidence="1">Centrosome</location>
        <location evidence="1">Centriolar satellite</location>
    </subcellularLocation>
    <text evidence="2">Localizes to basal bodies.</text>
</comment>
<comment type="disruption phenotype">
    <text evidence="4">Single mutants do not display any obvious defects in ciliogenesis. Double bbs-5 and bbs-4 mutants display a defect in cilia structure and function. This is characterized by increased accumulation and mislocalization of intraflagellar transport proteins and impaired movement of intraflagellar transport proteins along the ciliary axoneme. Double mutants also have defective polycystin-mediated cilia signaling and mislocalized and increased accumulation of mechanosensory receptors pkd-2, osm-9 and odr-10 within cilia.</text>
</comment>
<comment type="similarity">
    <text evidence="5">Belongs to the BBS5 family.</text>
</comment>
<proteinExistence type="evidence at protein level"/>
<reference evidence="6" key="1">
    <citation type="journal article" date="1998" name="Science">
        <title>Genome sequence of the nematode C. elegans: a platform for investigating biology.</title>
        <authorList>
            <consortium name="The C. elegans sequencing consortium"/>
        </authorList>
    </citation>
    <scope>NUCLEOTIDE SEQUENCE [LARGE SCALE GENOMIC DNA]</scope>
    <source>
        <strain evidence="6">Bristol N2</strain>
    </source>
</reference>
<reference evidence="5" key="2">
    <citation type="journal article" date="2012" name="Nat. Cell Biol.">
        <title>The BBSome controls IFT assembly and turnaround in cilia.</title>
        <authorList>
            <person name="Wei Q."/>
            <person name="Zhang Y."/>
            <person name="Li Y."/>
            <person name="Zhang Q."/>
            <person name="Ling K."/>
            <person name="Hu J."/>
        </authorList>
    </citation>
    <scope>FUNCTION</scope>
</reference>
<reference evidence="5" key="3">
    <citation type="journal article" date="2015" name="Sci. Rep.">
        <title>BBS4 and BBS5 show functional redundancy in the BBSome to regulate the degradative sorting of ciliary sensory receptors.</title>
        <authorList>
            <person name="Xu Q."/>
            <person name="Zhang Y."/>
            <person name="Wei Q."/>
            <person name="Huang Y."/>
            <person name="Li Y."/>
            <person name="Ling K."/>
            <person name="Hu J."/>
        </authorList>
    </citation>
    <scope>FUNCTION</scope>
    <scope>INTERACTION WITH BBS-4</scope>
    <scope>DISRUPTION PHENOTYPE</scope>
</reference>
<evidence type="ECO:0000250" key="1">
    <source>
        <dbReference type="UniProtKB" id="Q8N3I7"/>
    </source>
</evidence>
<evidence type="ECO:0000250" key="2">
    <source>
        <dbReference type="UniProtKB" id="Q9CZQ9"/>
    </source>
</evidence>
<evidence type="ECO:0000269" key="3">
    <source>
    </source>
</evidence>
<evidence type="ECO:0000269" key="4">
    <source>
    </source>
</evidence>
<evidence type="ECO:0000305" key="5"/>
<evidence type="ECO:0000312" key="6">
    <source>
        <dbReference type="Proteomes" id="UP000001940"/>
    </source>
</evidence>
<evidence type="ECO:0000312" key="7">
    <source>
        <dbReference type="WormBase" id="R01H10.6"/>
    </source>
</evidence>